<name>LAMP5_MOUSE</name>
<dbReference type="EMBL" id="AK014127">
    <property type="protein sequence ID" value="BAB29169.1"/>
    <property type="status" value="ALT_INIT"/>
    <property type="molecule type" value="mRNA"/>
</dbReference>
<dbReference type="EMBL" id="AK018222">
    <property type="status" value="NOT_ANNOTATED_CDS"/>
    <property type="molecule type" value="mRNA"/>
</dbReference>
<dbReference type="EMBL" id="BC004791">
    <property type="protein sequence ID" value="AAH04791.1"/>
    <property type="status" value="ALT_INIT"/>
    <property type="molecule type" value="mRNA"/>
</dbReference>
<dbReference type="CCDS" id="CCDS16789.1"/>
<dbReference type="RefSeq" id="NP_001343477.1">
    <property type="nucleotide sequence ID" value="NM_001356548.1"/>
</dbReference>
<dbReference type="RefSeq" id="NP_083806.2">
    <property type="nucleotide sequence ID" value="NM_029530.3"/>
</dbReference>
<dbReference type="RefSeq" id="XP_006500427.1">
    <property type="nucleotide sequence ID" value="XM_006500364.3"/>
</dbReference>
<dbReference type="RefSeq" id="XP_017174807.1">
    <property type="nucleotide sequence ID" value="XM_017319318.1"/>
</dbReference>
<dbReference type="RefSeq" id="XP_036018557.1">
    <property type="nucleotide sequence ID" value="XM_036162664.1"/>
</dbReference>
<dbReference type="SMR" id="Q9D387"/>
<dbReference type="FunCoup" id="Q9D387">
    <property type="interactions" value="165"/>
</dbReference>
<dbReference type="STRING" id="10090.ENSMUSP00000061180"/>
<dbReference type="GlyConnect" id="2496">
    <property type="glycosylation" value="6 N-Linked glycans (1 site)"/>
</dbReference>
<dbReference type="GlyCosmos" id="Q9D387">
    <property type="glycosylation" value="4 sites, 6 glycans"/>
</dbReference>
<dbReference type="GlyGen" id="Q9D387">
    <property type="glycosylation" value="4 sites, 8 N-linked glycans (2 sites)"/>
</dbReference>
<dbReference type="iPTMnet" id="Q9D387"/>
<dbReference type="PhosphoSitePlus" id="Q9D387"/>
<dbReference type="PaxDb" id="10090-ENSMUSP00000061180"/>
<dbReference type="PeptideAtlas" id="Q9D387"/>
<dbReference type="ProteomicsDB" id="263701"/>
<dbReference type="ABCD" id="Q9D387">
    <property type="antibodies" value="4 sequenced antibodies"/>
</dbReference>
<dbReference type="Antibodypedia" id="24121">
    <property type="antibodies" value="111 antibodies from 19 providers"/>
</dbReference>
<dbReference type="DNASU" id="76161"/>
<dbReference type="Ensembl" id="ENSMUST00000057503.7">
    <property type="protein sequence ID" value="ENSMUSP00000061180.7"/>
    <property type="gene ID" value="ENSMUSG00000027270.15"/>
</dbReference>
<dbReference type="GeneID" id="76161"/>
<dbReference type="KEGG" id="mmu:76161"/>
<dbReference type="UCSC" id="uc008mog.1">
    <property type="organism name" value="mouse"/>
</dbReference>
<dbReference type="AGR" id="MGI:1923411"/>
<dbReference type="CTD" id="24141"/>
<dbReference type="MGI" id="MGI:1923411">
    <property type="gene designation" value="Lamp5"/>
</dbReference>
<dbReference type="VEuPathDB" id="HostDB:ENSMUSG00000027270"/>
<dbReference type="eggNOG" id="KOG4818">
    <property type="taxonomic scope" value="Eukaryota"/>
</dbReference>
<dbReference type="GeneTree" id="ENSGT00950000182899"/>
<dbReference type="HOGENOM" id="CLU_090529_0_0_1"/>
<dbReference type="InParanoid" id="Q9D387"/>
<dbReference type="OMA" id="CSQVRMA"/>
<dbReference type="OrthoDB" id="6248302at2759"/>
<dbReference type="PhylomeDB" id="Q9D387"/>
<dbReference type="TreeFam" id="TF330776"/>
<dbReference type="BioGRID-ORCS" id="76161">
    <property type="hits" value="1 hit in 80 CRISPR screens"/>
</dbReference>
<dbReference type="ChiTaRS" id="Lamp5">
    <property type="organism name" value="mouse"/>
</dbReference>
<dbReference type="PRO" id="PR:Q9D387"/>
<dbReference type="Proteomes" id="UP000000589">
    <property type="component" value="Chromosome 2"/>
</dbReference>
<dbReference type="RNAct" id="Q9D387">
    <property type="molecule type" value="protein"/>
</dbReference>
<dbReference type="Bgee" id="ENSMUSG00000027270">
    <property type="expression patterns" value="Expressed in medial vestibular nucleus and 116 other cell types or tissues"/>
</dbReference>
<dbReference type="ExpressionAtlas" id="Q9D387">
    <property type="expression patterns" value="baseline and differential"/>
</dbReference>
<dbReference type="GO" id="GO:0030659">
    <property type="term" value="C:cytoplasmic vesicle membrane"/>
    <property type="evidence" value="ECO:0000314"/>
    <property type="project" value="UniProtKB"/>
</dbReference>
<dbReference type="GO" id="GO:0032590">
    <property type="term" value="C:dendrite membrane"/>
    <property type="evidence" value="ECO:0000314"/>
    <property type="project" value="UniProtKB"/>
</dbReference>
<dbReference type="GO" id="GO:0031901">
    <property type="term" value="C:early endosome membrane"/>
    <property type="evidence" value="ECO:0000314"/>
    <property type="project" value="UniProtKB"/>
</dbReference>
<dbReference type="GO" id="GO:0033116">
    <property type="term" value="C:endoplasmic reticulum-Golgi intermediate compartment membrane"/>
    <property type="evidence" value="ECO:0000250"/>
    <property type="project" value="UniProtKB"/>
</dbReference>
<dbReference type="GO" id="GO:0010008">
    <property type="term" value="C:endosome membrane"/>
    <property type="evidence" value="ECO:0000250"/>
    <property type="project" value="UniProtKB"/>
</dbReference>
<dbReference type="GO" id="GO:0098982">
    <property type="term" value="C:GABA-ergic synapse"/>
    <property type="evidence" value="ECO:0000314"/>
    <property type="project" value="SynGO"/>
</dbReference>
<dbReference type="GO" id="GO:0032584">
    <property type="term" value="C:growth cone membrane"/>
    <property type="evidence" value="ECO:0000314"/>
    <property type="project" value="UniProtKB"/>
</dbReference>
<dbReference type="GO" id="GO:0005770">
    <property type="term" value="C:late endosome"/>
    <property type="evidence" value="ECO:0000314"/>
    <property type="project" value="MGI"/>
</dbReference>
<dbReference type="GO" id="GO:0005764">
    <property type="term" value="C:lysosome"/>
    <property type="evidence" value="ECO:0000314"/>
    <property type="project" value="MGI"/>
</dbReference>
<dbReference type="GO" id="GO:0005886">
    <property type="term" value="C:plasma membrane"/>
    <property type="evidence" value="ECO:0000314"/>
    <property type="project" value="UniProtKB"/>
</dbReference>
<dbReference type="GO" id="GO:0055038">
    <property type="term" value="C:recycling endosome membrane"/>
    <property type="evidence" value="ECO:0000314"/>
    <property type="project" value="UniProtKB"/>
</dbReference>
<dbReference type="GO" id="GO:0008021">
    <property type="term" value="C:synaptic vesicle"/>
    <property type="evidence" value="ECO:0000314"/>
    <property type="project" value="SynGO"/>
</dbReference>
<dbReference type="GO" id="GO:0030672">
    <property type="term" value="C:synaptic vesicle membrane"/>
    <property type="evidence" value="ECO:0007669"/>
    <property type="project" value="UniProtKB-SubCell"/>
</dbReference>
<dbReference type="GO" id="GO:0099171">
    <property type="term" value="P:presynaptic modulation of chemical synaptic transmission"/>
    <property type="evidence" value="ECO:0000314"/>
    <property type="project" value="SynGO"/>
</dbReference>
<dbReference type="FunFam" id="2.40.160.110:FF:000002">
    <property type="entry name" value="lysosome-associated membrane glycoprotein 5 isoform X1"/>
    <property type="match status" value="1"/>
</dbReference>
<dbReference type="Gene3D" id="2.40.160.110">
    <property type="match status" value="1"/>
</dbReference>
<dbReference type="InterPro" id="IPR048528">
    <property type="entry name" value="Lamp2-like_luminal"/>
</dbReference>
<dbReference type="InterPro" id="IPR002000">
    <property type="entry name" value="Lysosome-assoc_membr_glycop"/>
</dbReference>
<dbReference type="PANTHER" id="PTHR11506">
    <property type="entry name" value="LYSOSOME-ASSOCIATED MEMBRANE GLYCOPROTEIN"/>
    <property type="match status" value="1"/>
</dbReference>
<dbReference type="PANTHER" id="PTHR11506:SF35">
    <property type="entry name" value="LYSOSOME-ASSOCIATED MEMBRANE GLYCOPROTEIN 5"/>
    <property type="match status" value="1"/>
</dbReference>
<dbReference type="Pfam" id="PF01299">
    <property type="entry name" value="Lamp2-like_luminal"/>
    <property type="match status" value="1"/>
</dbReference>
<dbReference type="PROSITE" id="PS00310">
    <property type="entry name" value="LAMP_1"/>
    <property type="match status" value="1"/>
</dbReference>
<feature type="signal peptide" evidence="2">
    <location>
        <begin position="1"/>
        <end position="29"/>
    </location>
</feature>
<feature type="chain" id="PRO_0000021032" description="Lysosome-associated membrane glycoprotein 5">
    <location>
        <begin position="30"/>
        <end position="280"/>
    </location>
</feature>
<feature type="topological domain" description="Extracellular" evidence="2">
    <location>
        <begin position="30"/>
        <end position="235"/>
    </location>
</feature>
<feature type="transmembrane region" description="Helical" evidence="2">
    <location>
        <begin position="236"/>
        <end position="256"/>
    </location>
</feature>
<feature type="topological domain" description="Cytoplasmic" evidence="2">
    <location>
        <begin position="257"/>
        <end position="280"/>
    </location>
</feature>
<feature type="glycosylation site" description="N-linked (GlcNAc...) asparagine" evidence="2">
    <location>
        <position position="35"/>
    </location>
</feature>
<feature type="glycosylation site" description="N-linked (GlcNAc...) asparagine" evidence="2">
    <location>
        <position position="53"/>
    </location>
</feature>
<feature type="glycosylation site" description="N-linked (GlcNAc...) asparagine" evidence="2">
    <location>
        <position position="102"/>
    </location>
</feature>
<feature type="glycosylation site" description="N-linked (GlcNAc...) asparagine" evidence="2">
    <location>
        <position position="127"/>
    </location>
</feature>
<feature type="mutagenesis site" description="Cell surface localization." evidence="3">
    <original>Y</original>
    <variation>A</variation>
    <location>
        <position position="276"/>
    </location>
</feature>
<feature type="sequence conflict" description="In Ref. 1; AK018222." evidence="5" ref="1">
    <original>E</original>
    <variation>V</variation>
    <location>
        <position position="221"/>
    </location>
</feature>
<feature type="sequence conflict" description="In Ref. 1; AK018222." evidence="5" ref="1">
    <original>Q</original>
    <variation>P</variation>
    <location>
        <position position="230"/>
    </location>
</feature>
<feature type="sequence conflict" description="In Ref. 1; AK018222." evidence="5" ref="1">
    <original>P</original>
    <variation>A</variation>
    <location>
        <position position="238"/>
    </location>
</feature>
<comment type="function">
    <text evidence="4">Plays a role in short-term synaptic plasticity in a subset of GABAergic neurons in the brain.</text>
</comment>
<comment type="subcellular location">
    <subcellularLocation>
        <location evidence="3">Cytoplasmic vesicle membrane</location>
        <topology evidence="5">Single-pass type I membrane protein</topology>
    </subcellularLocation>
    <subcellularLocation>
        <location evidence="3">Cell membrane</location>
        <topology evidence="3">Single-pass type I membrane protein</topology>
    </subcellularLocation>
    <subcellularLocation>
        <location evidence="3">Cell projection</location>
        <location evidence="3">Dendrite</location>
    </subcellularLocation>
    <subcellularLocation>
        <location evidence="4">Cytoplasmic vesicle</location>
        <location evidence="4">Secretory vesicle</location>
        <location evidence="4">Synaptic vesicle membrane</location>
        <topology evidence="5">Single-pass type I membrane protein</topology>
    </subcellularLocation>
    <subcellularLocation>
        <location evidence="3">Cell projection</location>
        <location evidence="3">Growth cone membrane</location>
        <topology evidence="5">Single-pass type I membrane protein</topology>
    </subcellularLocation>
    <subcellularLocation>
        <location evidence="3">Early endosome membrane</location>
        <topology evidence="3">Single-pass type I membrane protein</topology>
    </subcellularLocation>
    <subcellularLocation>
        <location evidence="3">Recycling endosome</location>
    </subcellularLocation>
    <subcellularLocation>
        <location evidence="1">Endoplasmic reticulum-Golgi intermediate compartment membrane</location>
        <topology evidence="5">Single-pass type I membrane protein</topology>
    </subcellularLocation>
    <subcellularLocation>
        <location evidence="1">Endosome membrane</location>
        <topology evidence="5">Single-pass type I membrane protein</topology>
    </subcellularLocation>
    <text evidence="1 4">Recycles from the vesicles of the endocytic recycling compartment (ERC) to the plasma membrane (PubMed:17215451). Colocalizes with UNC93B1 in large endosomal intracellular vesicles (By similarity). Accumulates in the endoplasmic reticulum-Golgi intermediate compartment (ERGIC) before its disappearance upon activation by CpG dinucleotides (By similarity). Associates with cortical membranes (By similarity). Localizes mostly in cytoplasmic vesicles of neuronal cell body (PubMed:17215451). Localizes to synaptic vesicles in a subset of GABAergic neurons (PubMed:27272053).</text>
</comment>
<comment type="tissue specificity">
    <text evidence="3 4">In brain, strongly expressed in the globus pallidus/ventral pallidum complex, the substantia nigra pars reticulata and the entopeduncular nucleus (at protein level) (PubMed:27272053). Expressed in the external plexiform layer of the olfactory bulb (at protein level). May be weakly expressed in neocortex and striatum (at protein level) (PubMed:27272053). Highly expressed in brain; not detected in other tissues tested (PubMed:17215451). Detected in the cingulate cortex, cortical plate and caudate putamen (PubMed:17215451). In neocortex, specifically expressed in neurons of layers II/III and V (PubMed:17215451).</text>
</comment>
<comment type="developmental stage">
    <text evidence="3">Expressed in embryo at 14 dpc.</text>
</comment>
<comment type="PTM">
    <text evidence="3">Glycosylated.</text>
</comment>
<comment type="disruption phenotype">
    <text evidence="4">Gross morphology and brain structure are normal. Behavioral assays of locomotory activity, exploratory behavior and motor coordination are also normal. However, some subtle behavioral defects are observed: anxiety levels are decreased and animals also show mild defects in odor discrimination. Electrophysiological assays of striatopallidal synapses indicate defects in short-term synaptic plasticity.</text>
</comment>
<comment type="similarity">
    <text evidence="5">Belongs to the LAMP family.</text>
</comment>
<comment type="sequence caution" evidence="5">
    <conflict type="erroneous initiation">
        <sequence resource="EMBL-CDS" id="AAH04791"/>
    </conflict>
    <text>Truncated N-terminus.</text>
</comment>
<comment type="sequence caution" evidence="5">
    <conflict type="frameshift">
        <sequence resource="EMBL" id="AK018222"/>
    </conflict>
</comment>
<comment type="sequence caution" evidence="5">
    <conflict type="erroneous initiation">
        <sequence resource="EMBL-CDS" id="BAB29169"/>
    </conflict>
    <text>Truncated N-terminus.</text>
</comment>
<keyword id="KW-1003">Cell membrane</keyword>
<keyword id="KW-0966">Cell projection</keyword>
<keyword id="KW-0968">Cytoplasmic vesicle</keyword>
<keyword id="KW-0967">Endosome</keyword>
<keyword id="KW-0325">Glycoprotein</keyword>
<keyword id="KW-0472">Membrane</keyword>
<keyword id="KW-1185">Reference proteome</keyword>
<keyword id="KW-0732">Signal</keyword>
<keyword id="KW-0770">Synapse</keyword>
<keyword id="KW-0812">Transmembrane</keyword>
<keyword id="KW-1133">Transmembrane helix</keyword>
<sequence length="280" mass="31721">MDLRVRTLLGGDRLRILLMFFHVMVQTVAEQEVENLSGLSTNPEKDIFVVRENGTTCLMAEFAAKFIVPYDVWASNYVDLITEQAEISLTRGAEVKGHCGHNESELEVFWVDHAYTLRMLFVKESHNTSKGPEATWNLNKVHFVYDSSEKTHFKAPVKVNKYIASSHHLSALVTPAGMSYECQAQQTISLASSDPQKTVTMILSAVHIQPFDIISDFVFSEEHKCPVDEQEQLEETLPLILGLILGLVIVITLVIYHIHHKMTANQVQIPRDRSQYKHMG</sequence>
<proteinExistence type="evidence at protein level"/>
<accession>Q9D387</accession>
<accession>Q9CXQ4</accession>
<evidence type="ECO:0000250" key="1">
    <source>
        <dbReference type="UniProtKB" id="Q9UJQ1"/>
    </source>
</evidence>
<evidence type="ECO:0000255" key="2"/>
<evidence type="ECO:0000269" key="3">
    <source>
    </source>
</evidence>
<evidence type="ECO:0000269" key="4">
    <source>
    </source>
</evidence>
<evidence type="ECO:0000305" key="5"/>
<protein>
    <recommendedName>
        <fullName>Lysosome-associated membrane glycoprotein 5</fullName>
    </recommendedName>
    <alternativeName>
        <fullName>Brain and dendritic cell-associated LAMP</fullName>
    </alternativeName>
    <alternativeName>
        <fullName>Brain-associated LAMP-like protein</fullName>
        <shortName>BAD-LAMP</shortName>
    </alternativeName>
    <alternativeName>
        <fullName>Lysosome-associated membrane protein 5</fullName>
        <shortName>LAMP-5</shortName>
    </alternativeName>
</protein>
<gene>
    <name type="primary">Lamp5</name>
</gene>
<reference key="1">
    <citation type="journal article" date="2005" name="Science">
        <title>The transcriptional landscape of the mammalian genome.</title>
        <authorList>
            <person name="Carninci P."/>
            <person name="Kasukawa T."/>
            <person name="Katayama S."/>
            <person name="Gough J."/>
            <person name="Frith M.C."/>
            <person name="Maeda N."/>
            <person name="Oyama R."/>
            <person name="Ravasi T."/>
            <person name="Lenhard B."/>
            <person name="Wells C."/>
            <person name="Kodzius R."/>
            <person name="Shimokawa K."/>
            <person name="Bajic V.B."/>
            <person name="Brenner S.E."/>
            <person name="Batalov S."/>
            <person name="Forrest A.R."/>
            <person name="Zavolan M."/>
            <person name="Davis M.J."/>
            <person name="Wilming L.G."/>
            <person name="Aidinis V."/>
            <person name="Allen J.E."/>
            <person name="Ambesi-Impiombato A."/>
            <person name="Apweiler R."/>
            <person name="Aturaliya R.N."/>
            <person name="Bailey T.L."/>
            <person name="Bansal M."/>
            <person name="Baxter L."/>
            <person name="Beisel K.W."/>
            <person name="Bersano T."/>
            <person name="Bono H."/>
            <person name="Chalk A.M."/>
            <person name="Chiu K.P."/>
            <person name="Choudhary V."/>
            <person name="Christoffels A."/>
            <person name="Clutterbuck D.R."/>
            <person name="Crowe M.L."/>
            <person name="Dalla E."/>
            <person name="Dalrymple B.P."/>
            <person name="de Bono B."/>
            <person name="Della Gatta G."/>
            <person name="di Bernardo D."/>
            <person name="Down T."/>
            <person name="Engstrom P."/>
            <person name="Fagiolini M."/>
            <person name="Faulkner G."/>
            <person name="Fletcher C.F."/>
            <person name="Fukushima T."/>
            <person name="Furuno M."/>
            <person name="Futaki S."/>
            <person name="Gariboldi M."/>
            <person name="Georgii-Hemming P."/>
            <person name="Gingeras T.R."/>
            <person name="Gojobori T."/>
            <person name="Green R.E."/>
            <person name="Gustincich S."/>
            <person name="Harbers M."/>
            <person name="Hayashi Y."/>
            <person name="Hensch T.K."/>
            <person name="Hirokawa N."/>
            <person name="Hill D."/>
            <person name="Huminiecki L."/>
            <person name="Iacono M."/>
            <person name="Ikeo K."/>
            <person name="Iwama A."/>
            <person name="Ishikawa T."/>
            <person name="Jakt M."/>
            <person name="Kanapin A."/>
            <person name="Katoh M."/>
            <person name="Kawasawa Y."/>
            <person name="Kelso J."/>
            <person name="Kitamura H."/>
            <person name="Kitano H."/>
            <person name="Kollias G."/>
            <person name="Krishnan S.P."/>
            <person name="Kruger A."/>
            <person name="Kummerfeld S.K."/>
            <person name="Kurochkin I.V."/>
            <person name="Lareau L.F."/>
            <person name="Lazarevic D."/>
            <person name="Lipovich L."/>
            <person name="Liu J."/>
            <person name="Liuni S."/>
            <person name="McWilliam S."/>
            <person name="Madan Babu M."/>
            <person name="Madera M."/>
            <person name="Marchionni L."/>
            <person name="Matsuda H."/>
            <person name="Matsuzawa S."/>
            <person name="Miki H."/>
            <person name="Mignone F."/>
            <person name="Miyake S."/>
            <person name="Morris K."/>
            <person name="Mottagui-Tabar S."/>
            <person name="Mulder N."/>
            <person name="Nakano N."/>
            <person name="Nakauchi H."/>
            <person name="Ng P."/>
            <person name="Nilsson R."/>
            <person name="Nishiguchi S."/>
            <person name="Nishikawa S."/>
            <person name="Nori F."/>
            <person name="Ohara O."/>
            <person name="Okazaki Y."/>
            <person name="Orlando V."/>
            <person name="Pang K.C."/>
            <person name="Pavan W.J."/>
            <person name="Pavesi G."/>
            <person name="Pesole G."/>
            <person name="Petrovsky N."/>
            <person name="Piazza S."/>
            <person name="Reed J."/>
            <person name="Reid J.F."/>
            <person name="Ring B.Z."/>
            <person name="Ringwald M."/>
            <person name="Rost B."/>
            <person name="Ruan Y."/>
            <person name="Salzberg S.L."/>
            <person name="Sandelin A."/>
            <person name="Schneider C."/>
            <person name="Schoenbach C."/>
            <person name="Sekiguchi K."/>
            <person name="Semple C.A."/>
            <person name="Seno S."/>
            <person name="Sessa L."/>
            <person name="Sheng Y."/>
            <person name="Shibata Y."/>
            <person name="Shimada H."/>
            <person name="Shimada K."/>
            <person name="Silva D."/>
            <person name="Sinclair B."/>
            <person name="Sperling S."/>
            <person name="Stupka E."/>
            <person name="Sugiura K."/>
            <person name="Sultana R."/>
            <person name="Takenaka Y."/>
            <person name="Taki K."/>
            <person name="Tammoja K."/>
            <person name="Tan S.L."/>
            <person name="Tang S."/>
            <person name="Taylor M.S."/>
            <person name="Tegner J."/>
            <person name="Teichmann S.A."/>
            <person name="Ueda H.R."/>
            <person name="van Nimwegen E."/>
            <person name="Verardo R."/>
            <person name="Wei C.L."/>
            <person name="Yagi K."/>
            <person name="Yamanishi H."/>
            <person name="Zabarovsky E."/>
            <person name="Zhu S."/>
            <person name="Zimmer A."/>
            <person name="Hide W."/>
            <person name="Bult C."/>
            <person name="Grimmond S.M."/>
            <person name="Teasdale R.D."/>
            <person name="Liu E.T."/>
            <person name="Brusic V."/>
            <person name="Quackenbush J."/>
            <person name="Wahlestedt C."/>
            <person name="Mattick J.S."/>
            <person name="Hume D.A."/>
            <person name="Kai C."/>
            <person name="Sasaki D."/>
            <person name="Tomaru Y."/>
            <person name="Fukuda S."/>
            <person name="Kanamori-Katayama M."/>
            <person name="Suzuki M."/>
            <person name="Aoki J."/>
            <person name="Arakawa T."/>
            <person name="Iida J."/>
            <person name="Imamura K."/>
            <person name="Itoh M."/>
            <person name="Kato T."/>
            <person name="Kawaji H."/>
            <person name="Kawagashira N."/>
            <person name="Kawashima T."/>
            <person name="Kojima M."/>
            <person name="Kondo S."/>
            <person name="Konno H."/>
            <person name="Nakano K."/>
            <person name="Ninomiya N."/>
            <person name="Nishio T."/>
            <person name="Okada M."/>
            <person name="Plessy C."/>
            <person name="Shibata K."/>
            <person name="Shiraki T."/>
            <person name="Suzuki S."/>
            <person name="Tagami M."/>
            <person name="Waki K."/>
            <person name="Watahiki A."/>
            <person name="Okamura-Oho Y."/>
            <person name="Suzuki H."/>
            <person name="Kawai J."/>
            <person name="Hayashizaki Y."/>
        </authorList>
    </citation>
    <scope>NUCLEOTIDE SEQUENCE [LARGE SCALE MRNA]</scope>
    <source>
        <strain>C57BL/6J</strain>
        <tissue>Embryonic head</tissue>
        <tissue>Medulla oblongata</tissue>
    </source>
</reference>
<reference key="2">
    <citation type="journal article" date="2004" name="Genome Res.">
        <title>The status, quality, and expansion of the NIH full-length cDNA project: the Mammalian Gene Collection (MGC).</title>
        <authorList>
            <consortium name="The MGC Project Team"/>
        </authorList>
    </citation>
    <scope>NUCLEOTIDE SEQUENCE [LARGE SCALE MRNA] OF 114-280</scope>
    <source>
        <strain>Czech II</strain>
        <tissue>Mammary fibroblast</tissue>
    </source>
</reference>
<reference key="3">
    <citation type="journal article" date="2007" name="J. Cell Sci.">
        <title>BAD-LAMP defines a subset of early endocytic organelles in subpopulations of cortical projection neurons.</title>
        <authorList>
            <person name="David A."/>
            <person name="Tiveron M.C."/>
            <person name="Defays A."/>
            <person name="Beclin C."/>
            <person name="Camosseto V."/>
            <person name="Gatti E."/>
            <person name="Cremer H."/>
            <person name="Pierre P."/>
        </authorList>
    </citation>
    <scope>SUBCELLULAR LOCATION</scope>
    <scope>MUTAGENESIS OF TYR-276</scope>
    <scope>GLYCOSYLATION</scope>
    <scope>TISSUE SPECIFICITY</scope>
    <scope>DEVELOPMENTAL STAGE</scope>
</reference>
<reference key="4">
    <citation type="journal article" date="2016" name="PLoS ONE">
        <title>LAMP5 fine-tunes GABAergic synaptic transmission in defined circuits of the mouse brain.</title>
        <authorList>
            <person name="Tiveron M.C."/>
            <person name="Beurrier C."/>
            <person name="Ceni C."/>
            <person name="Andriambao N."/>
            <person name="Combes A."/>
            <person name="Koehl M."/>
            <person name="Maurice N."/>
            <person name="Gatti E."/>
            <person name="Abrous D.N."/>
            <person name="Kerkerian-Le Goff L."/>
            <person name="Pierre P."/>
            <person name="Cremer H."/>
        </authorList>
    </citation>
    <scope>FUNCTION</scope>
    <scope>SUBCELLULAR LOCATION</scope>
    <scope>TISSUE SPECIFICITY</scope>
    <scope>DISRUPTION PHENOTYPE</scope>
</reference>
<organism>
    <name type="scientific">Mus musculus</name>
    <name type="common">Mouse</name>
    <dbReference type="NCBI Taxonomy" id="10090"/>
    <lineage>
        <taxon>Eukaryota</taxon>
        <taxon>Metazoa</taxon>
        <taxon>Chordata</taxon>
        <taxon>Craniata</taxon>
        <taxon>Vertebrata</taxon>
        <taxon>Euteleostomi</taxon>
        <taxon>Mammalia</taxon>
        <taxon>Eutheria</taxon>
        <taxon>Euarchontoglires</taxon>
        <taxon>Glires</taxon>
        <taxon>Rodentia</taxon>
        <taxon>Myomorpha</taxon>
        <taxon>Muroidea</taxon>
        <taxon>Muridae</taxon>
        <taxon>Murinae</taxon>
        <taxon>Mus</taxon>
        <taxon>Mus</taxon>
    </lineage>
</organism>